<proteinExistence type="evidence at transcript level"/>
<accession>A6MFL0</accession>
<feature type="signal peptide" evidence="3">
    <location>
        <begin position="1"/>
        <end position="18"/>
    </location>
</feature>
<feature type="chain" id="PRO_5000254114" description="L-amino-acid oxidase">
    <location>
        <begin position="19"/>
        <end position="517"/>
    </location>
</feature>
<feature type="binding site" evidence="2">
    <location>
        <begin position="62"/>
        <end position="63"/>
    </location>
    <ligand>
        <name>FAD</name>
        <dbReference type="ChEBI" id="CHEBI:57692"/>
    </ligand>
</feature>
<feature type="binding site" evidence="2">
    <location>
        <begin position="82"/>
        <end position="83"/>
    </location>
    <ligand>
        <name>FAD</name>
        <dbReference type="ChEBI" id="CHEBI:57692"/>
    </ligand>
</feature>
<feature type="binding site" evidence="2">
    <location>
        <position position="90"/>
    </location>
    <ligand>
        <name>FAD</name>
        <dbReference type="ChEBI" id="CHEBI:57692"/>
    </ligand>
</feature>
<feature type="binding site" evidence="2">
    <location>
        <begin position="106"/>
        <end position="109"/>
    </location>
    <ligand>
        <name>FAD</name>
        <dbReference type="ChEBI" id="CHEBI:57692"/>
    </ligand>
</feature>
<feature type="binding site" evidence="2">
    <location>
        <position position="109"/>
    </location>
    <ligand>
        <name>substrate</name>
    </ligand>
</feature>
<feature type="binding site" evidence="2">
    <location>
        <position position="280"/>
    </location>
    <ligand>
        <name>FAD</name>
        <dbReference type="ChEBI" id="CHEBI:57692"/>
    </ligand>
</feature>
<feature type="binding site" evidence="2">
    <location>
        <position position="391"/>
    </location>
    <ligand>
        <name>substrate</name>
    </ligand>
</feature>
<feature type="binding site" evidence="2">
    <location>
        <position position="476"/>
    </location>
    <ligand>
        <name>FAD</name>
        <dbReference type="ChEBI" id="CHEBI:57692"/>
    </ligand>
</feature>
<feature type="binding site" evidence="2">
    <location>
        <begin position="483"/>
        <end position="488"/>
    </location>
    <ligand>
        <name>FAD</name>
        <dbReference type="ChEBI" id="CHEBI:57692"/>
    </ligand>
</feature>
<feature type="binding site" evidence="2">
    <location>
        <begin position="483"/>
        <end position="484"/>
    </location>
    <ligand>
        <name>substrate</name>
    </ligand>
</feature>
<feature type="glycosylation site" description="N-linked (GlcNAc...) asparagine" evidence="3">
    <location>
        <position position="191"/>
    </location>
</feature>
<feature type="disulfide bond" evidence="2">
    <location>
        <begin position="29"/>
        <end position="192"/>
    </location>
</feature>
<feature type="disulfide bond" evidence="2">
    <location>
        <begin position="350"/>
        <end position="431"/>
    </location>
</feature>
<protein>
    <recommendedName>
        <fullName>L-amino-acid oxidase</fullName>
        <shortName evidence="4">DvLAAO</shortName>
        <shortName>LAO</shortName>
        <ecNumber evidence="2">1.4.3.2</ecNumber>
    </recommendedName>
</protein>
<organism>
    <name type="scientific">Demansia vestigiata</name>
    <name type="common">Lesser black whip snake</name>
    <name type="synonym">Demansia atra</name>
    <dbReference type="NCBI Taxonomy" id="412038"/>
    <lineage>
        <taxon>Eukaryota</taxon>
        <taxon>Metazoa</taxon>
        <taxon>Chordata</taxon>
        <taxon>Craniata</taxon>
        <taxon>Vertebrata</taxon>
        <taxon>Euteleostomi</taxon>
        <taxon>Lepidosauria</taxon>
        <taxon>Squamata</taxon>
        <taxon>Bifurcata</taxon>
        <taxon>Unidentata</taxon>
        <taxon>Episquamata</taxon>
        <taxon>Toxicofera</taxon>
        <taxon>Serpentes</taxon>
        <taxon>Colubroidea</taxon>
        <taxon>Elapidae</taxon>
        <taxon>Notechinae</taxon>
        <taxon>Demansia</taxon>
    </lineage>
</organism>
<keyword id="KW-0044">Antibiotic</keyword>
<keyword id="KW-0929">Antimicrobial</keyword>
<keyword id="KW-0053">Apoptosis</keyword>
<keyword id="KW-0204">Cytolysis</keyword>
<keyword id="KW-1015">Disulfide bond</keyword>
<keyword id="KW-0274">FAD</keyword>
<keyword id="KW-0285">Flavoprotein</keyword>
<keyword id="KW-0325">Glycoprotein</keyword>
<keyword id="KW-0354">Hemolysis</keyword>
<keyword id="KW-1199">Hemostasis impairing toxin</keyword>
<keyword id="KW-0560">Oxidoreductase</keyword>
<keyword id="KW-0964">Secreted</keyword>
<keyword id="KW-0732">Signal</keyword>
<keyword id="KW-0800">Toxin</keyword>
<comment type="function">
    <text evidence="1">Catalyzes an oxidative deamination of predominantly hydrophobic and aromatic L-amino acids, thus producing hydrogen peroxide that may contribute to the diverse toxic effects of this enzyme. Exhibits diverse biological activities, such as hemorrhage, hemolysis, edema, apoptosis of vascular endothelial cells or tumor cell lines, antibacterial and antiparasitic activities, as well as regulation of platelet aggregation. Its effect on platelets is controversial, since it either induces aggregation or inhibits agonist-induced aggregation. These different effects are probably due to different experimental conditions.</text>
</comment>
<comment type="catalytic activity">
    <reaction evidence="2">
        <text>an L-alpha-amino acid + O2 + H2O = a 2-oxocarboxylate + H2O2 + NH4(+)</text>
        <dbReference type="Rhea" id="RHEA:13781"/>
        <dbReference type="ChEBI" id="CHEBI:15377"/>
        <dbReference type="ChEBI" id="CHEBI:15379"/>
        <dbReference type="ChEBI" id="CHEBI:16240"/>
        <dbReference type="ChEBI" id="CHEBI:28938"/>
        <dbReference type="ChEBI" id="CHEBI:35179"/>
        <dbReference type="ChEBI" id="CHEBI:59869"/>
        <dbReference type="EC" id="1.4.3.2"/>
    </reaction>
</comment>
<comment type="cofactor">
    <cofactor evidence="2">
        <name>FAD</name>
        <dbReference type="ChEBI" id="CHEBI:57692"/>
    </cofactor>
</comment>
<comment type="subunit">
    <text evidence="2">Homodimer; non-covalently linked.</text>
</comment>
<comment type="subcellular location">
    <subcellularLocation>
        <location evidence="6">Secreted</location>
    </subcellularLocation>
</comment>
<comment type="tissue specificity">
    <text evidence="6">Expressed by the venom gland.</text>
</comment>
<comment type="PTM">
    <text evidence="2">N-glycosylated.</text>
</comment>
<comment type="similarity">
    <text evidence="5">Belongs to the flavin monoamine oxidase family. FIG1 subfamily.</text>
</comment>
<evidence type="ECO:0000250" key="1">
    <source>
        <dbReference type="UniProtKB" id="P0CC17"/>
    </source>
</evidence>
<evidence type="ECO:0000250" key="2">
    <source>
        <dbReference type="UniProtKB" id="P81382"/>
    </source>
</evidence>
<evidence type="ECO:0000255" key="3"/>
<evidence type="ECO:0000303" key="4">
    <source>
    </source>
</evidence>
<evidence type="ECO:0000305" key="5"/>
<evidence type="ECO:0000305" key="6">
    <source>
    </source>
</evidence>
<sequence>MNVFFMFSLLFLAALESCADDRRNPLGECFREADYEEFVDIATNGLKQTSNPKRVVVVGAGMAGLSAAYVLAGAGHNVMLLEASERVGGRVNTYRNEQEGWYVNLGPMRLPERHRIVREYIKKFGLQLNQFFQEDEDAWYFIKNIRKKVREVKENPSIFPYPVKPSEKGKSAPQLYRDSLQKIIEEYGRSNCSYILNKYDTYSTKDYLIKEGNLSPGAVDMIGDLLNEGSSYYLSFIESLKSDDIFSYENRFDEIVGGFDLLPKAMYKAIEEKVHLNARVIQIQQNAEGVRVTYQTPAKNLSYVTADYVIVCSTSRAARRIYFEPPLPPEKAHALQSIHYRSATKIFLTCTKKFWEDDGIHGGKSITDRPSRLIHYPNHNFPNGIGVLVIYTIADDADFFLALDNKTIADIVIHDLSLIHQLPKEKIRDLCYVSMIKKWSLDKYSMGSITTFAPYQFQEYFETVAAPVGRIYFAGEYTARAHGWIDSTIKSGLKAARDVNRASQKPSRIQLSNDNEL</sequence>
<dbReference type="EC" id="1.4.3.2" evidence="2"/>
<dbReference type="EMBL" id="DQ917521">
    <property type="protein sequence ID" value="ABK63550.1"/>
    <property type="molecule type" value="mRNA"/>
</dbReference>
<dbReference type="SMR" id="A6MFL0"/>
<dbReference type="GO" id="GO:0005576">
    <property type="term" value="C:extracellular region"/>
    <property type="evidence" value="ECO:0007669"/>
    <property type="project" value="UniProtKB-SubCell"/>
</dbReference>
<dbReference type="GO" id="GO:0001716">
    <property type="term" value="F:L-amino-acid oxidase activity"/>
    <property type="evidence" value="ECO:0007669"/>
    <property type="project" value="UniProtKB-EC"/>
</dbReference>
<dbReference type="GO" id="GO:0090729">
    <property type="term" value="F:toxin activity"/>
    <property type="evidence" value="ECO:0007669"/>
    <property type="project" value="UniProtKB-KW"/>
</dbReference>
<dbReference type="GO" id="GO:0009063">
    <property type="term" value="P:amino acid catabolic process"/>
    <property type="evidence" value="ECO:0007669"/>
    <property type="project" value="TreeGrafter"/>
</dbReference>
<dbReference type="GO" id="GO:0006915">
    <property type="term" value="P:apoptotic process"/>
    <property type="evidence" value="ECO:0007669"/>
    <property type="project" value="UniProtKB-KW"/>
</dbReference>
<dbReference type="GO" id="GO:0042742">
    <property type="term" value="P:defense response to bacterium"/>
    <property type="evidence" value="ECO:0007669"/>
    <property type="project" value="UniProtKB-KW"/>
</dbReference>
<dbReference type="GO" id="GO:0031640">
    <property type="term" value="P:killing of cells of another organism"/>
    <property type="evidence" value="ECO:0007669"/>
    <property type="project" value="UniProtKB-KW"/>
</dbReference>
<dbReference type="FunFam" id="1.10.405.10:FF:000004">
    <property type="entry name" value="Amine oxidase"/>
    <property type="match status" value="1"/>
</dbReference>
<dbReference type="FunFam" id="3.50.50.60:FF:000450">
    <property type="entry name" value="Amine oxidase"/>
    <property type="match status" value="1"/>
</dbReference>
<dbReference type="Gene3D" id="3.90.660.10">
    <property type="match status" value="1"/>
</dbReference>
<dbReference type="Gene3D" id="3.50.50.60">
    <property type="entry name" value="FAD/NAD(P)-binding domain"/>
    <property type="match status" value="1"/>
</dbReference>
<dbReference type="Gene3D" id="1.10.405.10">
    <property type="entry name" value="Guanine Nucleotide Dissociation Inhibitor, domain 1"/>
    <property type="match status" value="1"/>
</dbReference>
<dbReference type="InterPro" id="IPR002937">
    <property type="entry name" value="Amino_oxidase"/>
</dbReference>
<dbReference type="InterPro" id="IPR036188">
    <property type="entry name" value="FAD/NAD-bd_sf"/>
</dbReference>
<dbReference type="InterPro" id="IPR001613">
    <property type="entry name" value="Flavin_amine_oxidase"/>
</dbReference>
<dbReference type="InterPro" id="IPR050281">
    <property type="entry name" value="Flavin_monoamine_oxidase"/>
</dbReference>
<dbReference type="PANTHER" id="PTHR10742:SF355">
    <property type="entry name" value="AMINE OXIDASE"/>
    <property type="match status" value="1"/>
</dbReference>
<dbReference type="PANTHER" id="PTHR10742">
    <property type="entry name" value="FLAVIN MONOAMINE OXIDASE"/>
    <property type="match status" value="1"/>
</dbReference>
<dbReference type="Pfam" id="PF01593">
    <property type="entry name" value="Amino_oxidase"/>
    <property type="match status" value="1"/>
</dbReference>
<dbReference type="PRINTS" id="PR00757">
    <property type="entry name" value="AMINEOXDASEF"/>
</dbReference>
<dbReference type="SUPFAM" id="SSF54373">
    <property type="entry name" value="FAD-linked reductases, C-terminal domain"/>
    <property type="match status" value="1"/>
</dbReference>
<dbReference type="SUPFAM" id="SSF51905">
    <property type="entry name" value="FAD/NAD(P)-binding domain"/>
    <property type="match status" value="1"/>
</dbReference>
<name>OXLA_DEMVE</name>
<reference key="1">
    <citation type="journal article" date="2007" name="J. Proteome Res.">
        <title>Diversity of toxic components from the venom of the evolutionarily distinct black whip snake, Demansia vestigiata.</title>
        <authorList>
            <person name="St Pierre L."/>
            <person name="Birrell G.W."/>
            <person name="Earl S.T.H."/>
            <person name="Wallis T.P."/>
            <person name="Gorman J.J."/>
            <person name="de Jersey J."/>
            <person name="Masci P.P."/>
            <person name="Lavin M.F."/>
        </authorList>
    </citation>
    <scope>NUCLEOTIDE SEQUENCE [LARGE SCALE MRNA]</scope>
    <source>
        <tissue>Venom gland</tissue>
    </source>
</reference>